<protein>
    <recommendedName>
        <fullName evidence="1">Large ribosomal subunit protein bL27</fullName>
    </recommendedName>
    <alternativeName>
        <fullName evidence="3">50S ribosomal protein L27</fullName>
    </alternativeName>
</protein>
<dbReference type="EMBL" id="BA000035">
    <property type="protein sequence ID" value="BAC19080.1"/>
    <property type="molecule type" value="Genomic_DNA"/>
</dbReference>
<dbReference type="RefSeq" id="WP_006768274.1">
    <property type="nucleotide sequence ID" value="NC_004369.1"/>
</dbReference>
<dbReference type="SMR" id="Q8FN77"/>
<dbReference type="STRING" id="196164.gene:10742701"/>
<dbReference type="KEGG" id="cef:CE2270"/>
<dbReference type="eggNOG" id="COG0211">
    <property type="taxonomic scope" value="Bacteria"/>
</dbReference>
<dbReference type="HOGENOM" id="CLU_095424_4_0_11"/>
<dbReference type="OrthoDB" id="9803474at2"/>
<dbReference type="Proteomes" id="UP000001409">
    <property type="component" value="Chromosome"/>
</dbReference>
<dbReference type="GO" id="GO:0022625">
    <property type="term" value="C:cytosolic large ribosomal subunit"/>
    <property type="evidence" value="ECO:0007669"/>
    <property type="project" value="TreeGrafter"/>
</dbReference>
<dbReference type="GO" id="GO:0003735">
    <property type="term" value="F:structural constituent of ribosome"/>
    <property type="evidence" value="ECO:0007669"/>
    <property type="project" value="InterPro"/>
</dbReference>
<dbReference type="GO" id="GO:0006412">
    <property type="term" value="P:translation"/>
    <property type="evidence" value="ECO:0007669"/>
    <property type="project" value="UniProtKB-UniRule"/>
</dbReference>
<dbReference type="FunFam" id="2.40.50.100:FF:000020">
    <property type="entry name" value="50S ribosomal protein L27"/>
    <property type="match status" value="1"/>
</dbReference>
<dbReference type="Gene3D" id="2.40.50.100">
    <property type="match status" value="1"/>
</dbReference>
<dbReference type="HAMAP" id="MF_00539">
    <property type="entry name" value="Ribosomal_bL27"/>
    <property type="match status" value="1"/>
</dbReference>
<dbReference type="InterPro" id="IPR001684">
    <property type="entry name" value="Ribosomal_bL27"/>
</dbReference>
<dbReference type="InterPro" id="IPR018261">
    <property type="entry name" value="Ribosomal_bL27_CS"/>
</dbReference>
<dbReference type="NCBIfam" id="TIGR00062">
    <property type="entry name" value="L27"/>
    <property type="match status" value="1"/>
</dbReference>
<dbReference type="PANTHER" id="PTHR15893:SF0">
    <property type="entry name" value="LARGE RIBOSOMAL SUBUNIT PROTEIN BL27M"/>
    <property type="match status" value="1"/>
</dbReference>
<dbReference type="PANTHER" id="PTHR15893">
    <property type="entry name" value="RIBOSOMAL PROTEIN L27"/>
    <property type="match status" value="1"/>
</dbReference>
<dbReference type="Pfam" id="PF01016">
    <property type="entry name" value="Ribosomal_L27"/>
    <property type="match status" value="1"/>
</dbReference>
<dbReference type="PRINTS" id="PR00063">
    <property type="entry name" value="RIBOSOMALL27"/>
</dbReference>
<dbReference type="SUPFAM" id="SSF110324">
    <property type="entry name" value="Ribosomal L27 protein-like"/>
    <property type="match status" value="1"/>
</dbReference>
<dbReference type="PROSITE" id="PS00831">
    <property type="entry name" value="RIBOSOMAL_L27"/>
    <property type="match status" value="1"/>
</dbReference>
<accession>Q8FN77</accession>
<reference key="1">
    <citation type="journal article" date="2003" name="Genome Res.">
        <title>Comparative complete genome sequence analysis of the amino acid replacements responsible for the thermostability of Corynebacterium efficiens.</title>
        <authorList>
            <person name="Nishio Y."/>
            <person name="Nakamura Y."/>
            <person name="Kawarabayasi Y."/>
            <person name="Usuda Y."/>
            <person name="Kimura E."/>
            <person name="Sugimoto S."/>
            <person name="Matsui K."/>
            <person name="Yamagishi A."/>
            <person name="Kikuchi H."/>
            <person name="Ikeo K."/>
            <person name="Gojobori T."/>
        </authorList>
    </citation>
    <scope>NUCLEOTIDE SEQUENCE [LARGE SCALE GENOMIC DNA]</scope>
    <source>
        <strain>DSM 44549 / YS-314 / AJ 12310 / JCM 11189 / NBRC 100395</strain>
    </source>
</reference>
<evidence type="ECO:0000255" key="1">
    <source>
        <dbReference type="HAMAP-Rule" id="MF_00539"/>
    </source>
</evidence>
<evidence type="ECO:0000256" key="2">
    <source>
        <dbReference type="SAM" id="MobiDB-lite"/>
    </source>
</evidence>
<evidence type="ECO:0000305" key="3"/>
<gene>
    <name evidence="1" type="primary">rpmA</name>
    <name type="ordered locus">CE2270</name>
</gene>
<name>RL27_COREF</name>
<organism>
    <name type="scientific">Corynebacterium efficiens (strain DSM 44549 / YS-314 / AJ 12310 / JCM 11189 / NBRC 100395)</name>
    <dbReference type="NCBI Taxonomy" id="196164"/>
    <lineage>
        <taxon>Bacteria</taxon>
        <taxon>Bacillati</taxon>
        <taxon>Actinomycetota</taxon>
        <taxon>Actinomycetes</taxon>
        <taxon>Mycobacteriales</taxon>
        <taxon>Corynebacteriaceae</taxon>
        <taxon>Corynebacterium</taxon>
    </lineage>
</organism>
<keyword id="KW-1185">Reference proteome</keyword>
<keyword id="KW-0687">Ribonucleoprotein</keyword>
<keyword id="KW-0689">Ribosomal protein</keyword>
<comment type="similarity">
    <text evidence="1">Belongs to the bacterial ribosomal protein bL27 family.</text>
</comment>
<feature type="chain" id="PRO_0000181079" description="Large ribosomal subunit protein bL27">
    <location>
        <begin position="1"/>
        <end position="88"/>
    </location>
</feature>
<feature type="region of interest" description="Disordered" evidence="2">
    <location>
        <begin position="1"/>
        <end position="25"/>
    </location>
</feature>
<feature type="compositionally biased region" description="Polar residues" evidence="2">
    <location>
        <begin position="1"/>
        <end position="13"/>
    </location>
</feature>
<proteinExistence type="inferred from homology"/>
<sequence length="88" mass="9463">MATKKGASSSSNGRDSEAKRLGVKRFGGQQVNAGEILVRQRGTKFHPGENVGRGGDDTLFALKTGAVQFSTKRNRRMVNIVENEAVDA</sequence>